<name>GATB_GEOTN</name>
<comment type="function">
    <text evidence="1">Allows the formation of correctly charged Asn-tRNA(Asn) or Gln-tRNA(Gln) through the transamidation of misacylated Asp-tRNA(Asn) or Glu-tRNA(Gln) in organisms which lack either or both of asparaginyl-tRNA or glutaminyl-tRNA synthetases. The reaction takes place in the presence of glutamine and ATP through an activated phospho-Asp-tRNA(Asn) or phospho-Glu-tRNA(Gln).</text>
</comment>
<comment type="catalytic activity">
    <reaction evidence="1">
        <text>L-glutamyl-tRNA(Gln) + L-glutamine + ATP + H2O = L-glutaminyl-tRNA(Gln) + L-glutamate + ADP + phosphate + H(+)</text>
        <dbReference type="Rhea" id="RHEA:17521"/>
        <dbReference type="Rhea" id="RHEA-COMP:9681"/>
        <dbReference type="Rhea" id="RHEA-COMP:9684"/>
        <dbReference type="ChEBI" id="CHEBI:15377"/>
        <dbReference type="ChEBI" id="CHEBI:15378"/>
        <dbReference type="ChEBI" id="CHEBI:29985"/>
        <dbReference type="ChEBI" id="CHEBI:30616"/>
        <dbReference type="ChEBI" id="CHEBI:43474"/>
        <dbReference type="ChEBI" id="CHEBI:58359"/>
        <dbReference type="ChEBI" id="CHEBI:78520"/>
        <dbReference type="ChEBI" id="CHEBI:78521"/>
        <dbReference type="ChEBI" id="CHEBI:456216"/>
    </reaction>
</comment>
<comment type="catalytic activity">
    <reaction evidence="1">
        <text>L-aspartyl-tRNA(Asn) + L-glutamine + ATP + H2O = L-asparaginyl-tRNA(Asn) + L-glutamate + ADP + phosphate + 2 H(+)</text>
        <dbReference type="Rhea" id="RHEA:14513"/>
        <dbReference type="Rhea" id="RHEA-COMP:9674"/>
        <dbReference type="Rhea" id="RHEA-COMP:9677"/>
        <dbReference type="ChEBI" id="CHEBI:15377"/>
        <dbReference type="ChEBI" id="CHEBI:15378"/>
        <dbReference type="ChEBI" id="CHEBI:29985"/>
        <dbReference type="ChEBI" id="CHEBI:30616"/>
        <dbReference type="ChEBI" id="CHEBI:43474"/>
        <dbReference type="ChEBI" id="CHEBI:58359"/>
        <dbReference type="ChEBI" id="CHEBI:78515"/>
        <dbReference type="ChEBI" id="CHEBI:78516"/>
        <dbReference type="ChEBI" id="CHEBI:456216"/>
    </reaction>
</comment>
<comment type="subunit">
    <text evidence="1">Heterotrimer of A, B and C subunits.</text>
</comment>
<comment type="similarity">
    <text evidence="1">Belongs to the GatB/GatE family. GatB subfamily.</text>
</comment>
<proteinExistence type="inferred from homology"/>
<organism>
    <name type="scientific">Geobacillus thermodenitrificans (strain NG80-2)</name>
    <dbReference type="NCBI Taxonomy" id="420246"/>
    <lineage>
        <taxon>Bacteria</taxon>
        <taxon>Bacillati</taxon>
        <taxon>Bacillota</taxon>
        <taxon>Bacilli</taxon>
        <taxon>Bacillales</taxon>
        <taxon>Anoxybacillaceae</taxon>
        <taxon>Geobacillus</taxon>
    </lineage>
</organism>
<sequence length="476" mass="53608">MNFETVIGLEVHVELKTKSKIFSSSPNAFGAPPNTQTNVIDLGYPGVLPVLNRQAVEFAMKAAMALNCEIATETKFDRKNYFYPDNPKAYQISQYDQPLGKNGWIEIEVNGKKKKIGITRIHLEEDAGKLMHTGDGYSLVDFNRQGTPLIEIVSEPDIRSPEEAYAYLEKLKAIIQYTGVSDCKMEEGSLRCDANISLRPLGSDKFGTKTELKNLNSFNFVRMGLEYEAKRQEKILLSGGVIRQETRRFDEATKTTVLMRVKEGSEDYRYFPEPDLVMLYIDDEWKERVRASIPELPDARRKRYVEEWGLPEYDAKVLTLTKEMADFFEATVANGADPKLASNWLMVEVSGYLNSEQKELHDIALTPESLAGMIKLIQNGTISSKIAKKVFKELVEHGGDPEKIVKEKGLVQISDEGALRKIVLEVLDANPQSVEDYKNGKDRALGFLVGQVMKATKGQANPPLVNKLLVEEINKR</sequence>
<gene>
    <name evidence="1" type="primary">gatB</name>
    <name type="ordered locus">GTNG_0263</name>
</gene>
<dbReference type="EC" id="6.3.5.-" evidence="1"/>
<dbReference type="EMBL" id="CP000557">
    <property type="protein sequence ID" value="ABO65647.1"/>
    <property type="molecule type" value="Genomic_DNA"/>
</dbReference>
<dbReference type="RefSeq" id="WP_008881443.1">
    <property type="nucleotide sequence ID" value="NC_009328.1"/>
</dbReference>
<dbReference type="SMR" id="A4IJZ3"/>
<dbReference type="GeneID" id="87622133"/>
<dbReference type="KEGG" id="gtn:GTNG_0263"/>
<dbReference type="eggNOG" id="COG0064">
    <property type="taxonomic scope" value="Bacteria"/>
</dbReference>
<dbReference type="HOGENOM" id="CLU_019240_0_0_9"/>
<dbReference type="Proteomes" id="UP000001578">
    <property type="component" value="Chromosome"/>
</dbReference>
<dbReference type="GO" id="GO:0050566">
    <property type="term" value="F:asparaginyl-tRNA synthase (glutamine-hydrolyzing) activity"/>
    <property type="evidence" value="ECO:0007669"/>
    <property type="project" value="RHEA"/>
</dbReference>
<dbReference type="GO" id="GO:0005524">
    <property type="term" value="F:ATP binding"/>
    <property type="evidence" value="ECO:0007669"/>
    <property type="project" value="UniProtKB-KW"/>
</dbReference>
<dbReference type="GO" id="GO:0050567">
    <property type="term" value="F:glutaminyl-tRNA synthase (glutamine-hydrolyzing) activity"/>
    <property type="evidence" value="ECO:0007669"/>
    <property type="project" value="UniProtKB-UniRule"/>
</dbReference>
<dbReference type="GO" id="GO:0070681">
    <property type="term" value="P:glutaminyl-tRNAGln biosynthesis via transamidation"/>
    <property type="evidence" value="ECO:0007669"/>
    <property type="project" value="TreeGrafter"/>
</dbReference>
<dbReference type="GO" id="GO:0006412">
    <property type="term" value="P:translation"/>
    <property type="evidence" value="ECO:0007669"/>
    <property type="project" value="UniProtKB-UniRule"/>
</dbReference>
<dbReference type="FunFam" id="1.10.10.410:FF:000001">
    <property type="entry name" value="Aspartyl/glutamyl-tRNA(Asn/Gln) amidotransferase subunit B"/>
    <property type="match status" value="1"/>
</dbReference>
<dbReference type="FunFam" id="1.10.150.380:FF:000001">
    <property type="entry name" value="Aspartyl/glutamyl-tRNA(Asn/Gln) amidotransferase subunit B"/>
    <property type="match status" value="1"/>
</dbReference>
<dbReference type="Gene3D" id="1.10.10.410">
    <property type="match status" value="1"/>
</dbReference>
<dbReference type="Gene3D" id="1.10.150.380">
    <property type="entry name" value="GatB domain, N-terminal subdomain"/>
    <property type="match status" value="1"/>
</dbReference>
<dbReference type="HAMAP" id="MF_00121">
    <property type="entry name" value="GatB"/>
    <property type="match status" value="1"/>
</dbReference>
<dbReference type="InterPro" id="IPR017959">
    <property type="entry name" value="Asn/Gln-tRNA_amidoTrfase_suB/E"/>
</dbReference>
<dbReference type="InterPro" id="IPR006075">
    <property type="entry name" value="Asn/Gln-tRNA_Trfase_suB/E_cat"/>
</dbReference>
<dbReference type="InterPro" id="IPR018027">
    <property type="entry name" value="Asn/Gln_amidotransferase"/>
</dbReference>
<dbReference type="InterPro" id="IPR003789">
    <property type="entry name" value="Asn/Gln_tRNA_amidoTrase-B-like"/>
</dbReference>
<dbReference type="InterPro" id="IPR004413">
    <property type="entry name" value="GatB"/>
</dbReference>
<dbReference type="InterPro" id="IPR042114">
    <property type="entry name" value="GatB_C_1"/>
</dbReference>
<dbReference type="InterPro" id="IPR023168">
    <property type="entry name" value="GatB_Yqey_C_2"/>
</dbReference>
<dbReference type="InterPro" id="IPR017958">
    <property type="entry name" value="Gln-tRNA_amidoTrfase_suB_CS"/>
</dbReference>
<dbReference type="InterPro" id="IPR014746">
    <property type="entry name" value="Gln_synth/guanido_kin_cat_dom"/>
</dbReference>
<dbReference type="NCBIfam" id="TIGR00133">
    <property type="entry name" value="gatB"/>
    <property type="match status" value="1"/>
</dbReference>
<dbReference type="NCBIfam" id="NF004011">
    <property type="entry name" value="PRK05477.1-1"/>
    <property type="match status" value="1"/>
</dbReference>
<dbReference type="NCBIfam" id="NF004012">
    <property type="entry name" value="PRK05477.1-2"/>
    <property type="match status" value="1"/>
</dbReference>
<dbReference type="NCBIfam" id="NF004014">
    <property type="entry name" value="PRK05477.1-4"/>
    <property type="match status" value="1"/>
</dbReference>
<dbReference type="PANTHER" id="PTHR11659">
    <property type="entry name" value="GLUTAMYL-TRNA GLN AMIDOTRANSFERASE SUBUNIT B MITOCHONDRIAL AND PROKARYOTIC PET112-RELATED"/>
    <property type="match status" value="1"/>
</dbReference>
<dbReference type="PANTHER" id="PTHR11659:SF0">
    <property type="entry name" value="GLUTAMYL-TRNA(GLN) AMIDOTRANSFERASE SUBUNIT B, MITOCHONDRIAL"/>
    <property type="match status" value="1"/>
</dbReference>
<dbReference type="Pfam" id="PF02934">
    <property type="entry name" value="GatB_N"/>
    <property type="match status" value="1"/>
</dbReference>
<dbReference type="Pfam" id="PF02637">
    <property type="entry name" value="GatB_Yqey"/>
    <property type="match status" value="1"/>
</dbReference>
<dbReference type="SMART" id="SM00845">
    <property type="entry name" value="GatB_Yqey"/>
    <property type="match status" value="1"/>
</dbReference>
<dbReference type="SUPFAM" id="SSF89095">
    <property type="entry name" value="GatB/YqeY motif"/>
    <property type="match status" value="1"/>
</dbReference>
<dbReference type="SUPFAM" id="SSF55931">
    <property type="entry name" value="Glutamine synthetase/guanido kinase"/>
    <property type="match status" value="1"/>
</dbReference>
<dbReference type="PROSITE" id="PS01234">
    <property type="entry name" value="GATB"/>
    <property type="match status" value="1"/>
</dbReference>
<protein>
    <recommendedName>
        <fullName evidence="1">Aspartyl/glutamyl-tRNA(Asn/Gln) amidotransferase subunit B</fullName>
        <shortName evidence="1">Asp/Glu-ADT subunit B</shortName>
        <ecNumber evidence="1">6.3.5.-</ecNumber>
    </recommendedName>
</protein>
<reference key="1">
    <citation type="journal article" date="2007" name="Proc. Natl. Acad. Sci. U.S.A.">
        <title>Genome and proteome of long-chain alkane degrading Geobacillus thermodenitrificans NG80-2 isolated from a deep-subsurface oil reservoir.</title>
        <authorList>
            <person name="Feng L."/>
            <person name="Wang W."/>
            <person name="Cheng J."/>
            <person name="Ren Y."/>
            <person name="Zhao G."/>
            <person name="Gao C."/>
            <person name="Tang Y."/>
            <person name="Liu X."/>
            <person name="Han W."/>
            <person name="Peng X."/>
            <person name="Liu R."/>
            <person name="Wang L."/>
        </authorList>
    </citation>
    <scope>NUCLEOTIDE SEQUENCE [LARGE SCALE GENOMIC DNA]</scope>
    <source>
        <strain>NG80-2</strain>
    </source>
</reference>
<accession>A4IJZ3</accession>
<keyword id="KW-0067">ATP-binding</keyword>
<keyword id="KW-0436">Ligase</keyword>
<keyword id="KW-0547">Nucleotide-binding</keyword>
<keyword id="KW-0648">Protein biosynthesis</keyword>
<feature type="chain" id="PRO_1000015970" description="Aspartyl/glutamyl-tRNA(Asn/Gln) amidotransferase subunit B">
    <location>
        <begin position="1"/>
        <end position="476"/>
    </location>
</feature>
<evidence type="ECO:0000255" key="1">
    <source>
        <dbReference type="HAMAP-Rule" id="MF_00121"/>
    </source>
</evidence>